<sequence length="359" mass="40130">MENKKVIVGISGGVDSSVSALLLKQQGYDVTGVFMKNWEEDDTDEFCSAEQDIADAQAVCDSIGIPFKKINFTAEYWDNVFEHFLIEYKAGRTPNPDILCNKEIKFKAFLSYVHLLGGDYIATGHYAQTRLAADGSVQLVKGLDDNKDQTYFLYTLGQEQLRQTIFPIGNIEKSKVREIAKENNLVTFDKKDSTGICFIGERKFKEFLSKYLPAQKGEIHDENGIKIGMHDGLMYYTIGQRQGLGIGGVKDRPEVPWFAAKKDLENNVLIAVQGHDHPLLFKQSLQAIELSWVAGMAPADKFRCAAKVRYRQKDQSCEVEVNQDGSVNVTFDQPQRAITPGQSVVFYIDDVCLGGGVII</sequence>
<organism>
    <name type="scientific">Francisella tularensis subsp. holarctica (strain OSU18)</name>
    <dbReference type="NCBI Taxonomy" id="393011"/>
    <lineage>
        <taxon>Bacteria</taxon>
        <taxon>Pseudomonadati</taxon>
        <taxon>Pseudomonadota</taxon>
        <taxon>Gammaproteobacteria</taxon>
        <taxon>Thiotrichales</taxon>
        <taxon>Francisellaceae</taxon>
        <taxon>Francisella</taxon>
    </lineage>
</organism>
<dbReference type="EC" id="2.8.1.13" evidence="1"/>
<dbReference type="EMBL" id="CP000437">
    <property type="protein sequence ID" value="ABI82120.1"/>
    <property type="status" value="ALT_INIT"/>
    <property type="molecule type" value="Genomic_DNA"/>
</dbReference>
<dbReference type="RefSeq" id="WP_010032231.1">
    <property type="nucleotide sequence ID" value="NC_017463.1"/>
</dbReference>
<dbReference type="SMR" id="Q0BP64"/>
<dbReference type="KEGG" id="fth:FTH_0068"/>
<dbReference type="GO" id="GO:0005737">
    <property type="term" value="C:cytoplasm"/>
    <property type="evidence" value="ECO:0007669"/>
    <property type="project" value="UniProtKB-SubCell"/>
</dbReference>
<dbReference type="GO" id="GO:0005524">
    <property type="term" value="F:ATP binding"/>
    <property type="evidence" value="ECO:0007669"/>
    <property type="project" value="UniProtKB-KW"/>
</dbReference>
<dbReference type="GO" id="GO:0000049">
    <property type="term" value="F:tRNA binding"/>
    <property type="evidence" value="ECO:0007669"/>
    <property type="project" value="UniProtKB-KW"/>
</dbReference>
<dbReference type="GO" id="GO:0103016">
    <property type="term" value="F:tRNA-uridine 2-sulfurtransferase activity"/>
    <property type="evidence" value="ECO:0007669"/>
    <property type="project" value="UniProtKB-EC"/>
</dbReference>
<dbReference type="GO" id="GO:0002143">
    <property type="term" value="P:tRNA wobble position uridine thiolation"/>
    <property type="evidence" value="ECO:0007669"/>
    <property type="project" value="TreeGrafter"/>
</dbReference>
<dbReference type="CDD" id="cd01998">
    <property type="entry name" value="MnmA_TRMU-like"/>
    <property type="match status" value="1"/>
</dbReference>
<dbReference type="FunFam" id="2.30.30.280:FF:000001">
    <property type="entry name" value="tRNA-specific 2-thiouridylase MnmA"/>
    <property type="match status" value="1"/>
</dbReference>
<dbReference type="FunFam" id="2.40.30.10:FF:000023">
    <property type="entry name" value="tRNA-specific 2-thiouridylase MnmA"/>
    <property type="match status" value="1"/>
</dbReference>
<dbReference type="FunFam" id="3.40.50.620:FF:000004">
    <property type="entry name" value="tRNA-specific 2-thiouridylase MnmA"/>
    <property type="match status" value="1"/>
</dbReference>
<dbReference type="Gene3D" id="2.30.30.280">
    <property type="entry name" value="Adenine nucleotide alpha hydrolases-like domains"/>
    <property type="match status" value="1"/>
</dbReference>
<dbReference type="Gene3D" id="3.40.50.620">
    <property type="entry name" value="HUPs"/>
    <property type="match status" value="1"/>
</dbReference>
<dbReference type="Gene3D" id="2.40.30.10">
    <property type="entry name" value="Translation factors"/>
    <property type="match status" value="1"/>
</dbReference>
<dbReference type="HAMAP" id="MF_00144">
    <property type="entry name" value="tRNA_thiouridyl_MnmA"/>
    <property type="match status" value="1"/>
</dbReference>
<dbReference type="InterPro" id="IPR004506">
    <property type="entry name" value="MnmA-like"/>
</dbReference>
<dbReference type="InterPro" id="IPR046885">
    <property type="entry name" value="MnmA-like_C"/>
</dbReference>
<dbReference type="InterPro" id="IPR046884">
    <property type="entry name" value="MnmA-like_central"/>
</dbReference>
<dbReference type="InterPro" id="IPR023382">
    <property type="entry name" value="MnmA-like_central_sf"/>
</dbReference>
<dbReference type="InterPro" id="IPR014729">
    <property type="entry name" value="Rossmann-like_a/b/a_fold"/>
</dbReference>
<dbReference type="NCBIfam" id="NF001138">
    <property type="entry name" value="PRK00143.1"/>
    <property type="match status" value="1"/>
</dbReference>
<dbReference type="NCBIfam" id="TIGR00420">
    <property type="entry name" value="trmU"/>
    <property type="match status" value="1"/>
</dbReference>
<dbReference type="PANTHER" id="PTHR11933:SF5">
    <property type="entry name" value="MITOCHONDRIAL TRNA-SPECIFIC 2-THIOURIDYLASE 1"/>
    <property type="match status" value="1"/>
</dbReference>
<dbReference type="PANTHER" id="PTHR11933">
    <property type="entry name" value="TRNA 5-METHYLAMINOMETHYL-2-THIOURIDYLATE -METHYLTRANSFERASE"/>
    <property type="match status" value="1"/>
</dbReference>
<dbReference type="Pfam" id="PF03054">
    <property type="entry name" value="tRNA_Me_trans"/>
    <property type="match status" value="1"/>
</dbReference>
<dbReference type="Pfam" id="PF20258">
    <property type="entry name" value="tRNA_Me_trans_C"/>
    <property type="match status" value="1"/>
</dbReference>
<dbReference type="Pfam" id="PF20259">
    <property type="entry name" value="tRNA_Me_trans_M"/>
    <property type="match status" value="1"/>
</dbReference>
<dbReference type="SUPFAM" id="SSF52402">
    <property type="entry name" value="Adenine nucleotide alpha hydrolases-like"/>
    <property type="match status" value="1"/>
</dbReference>
<gene>
    <name evidence="1" type="primary">mnmA</name>
    <name type="ordered locus">FTH_0068</name>
</gene>
<keyword id="KW-0067">ATP-binding</keyword>
<keyword id="KW-0963">Cytoplasm</keyword>
<keyword id="KW-1015">Disulfide bond</keyword>
<keyword id="KW-0547">Nucleotide-binding</keyword>
<keyword id="KW-0694">RNA-binding</keyword>
<keyword id="KW-0808">Transferase</keyword>
<keyword id="KW-0819">tRNA processing</keyword>
<keyword id="KW-0820">tRNA-binding</keyword>
<name>MNMA_FRATO</name>
<protein>
    <recommendedName>
        <fullName evidence="1">tRNA-specific 2-thiouridylase MnmA</fullName>
        <ecNumber evidence="1">2.8.1.13</ecNumber>
    </recommendedName>
</protein>
<proteinExistence type="inferred from homology"/>
<comment type="function">
    <text evidence="1">Catalyzes the 2-thiolation of uridine at the wobble position (U34) of tRNA, leading to the formation of s(2)U34.</text>
</comment>
<comment type="catalytic activity">
    <reaction evidence="1">
        <text>S-sulfanyl-L-cysteinyl-[protein] + uridine(34) in tRNA + AH2 + ATP = 2-thiouridine(34) in tRNA + L-cysteinyl-[protein] + A + AMP + diphosphate + H(+)</text>
        <dbReference type="Rhea" id="RHEA:47032"/>
        <dbReference type="Rhea" id="RHEA-COMP:10131"/>
        <dbReference type="Rhea" id="RHEA-COMP:11726"/>
        <dbReference type="Rhea" id="RHEA-COMP:11727"/>
        <dbReference type="Rhea" id="RHEA-COMP:11728"/>
        <dbReference type="ChEBI" id="CHEBI:13193"/>
        <dbReference type="ChEBI" id="CHEBI:15378"/>
        <dbReference type="ChEBI" id="CHEBI:17499"/>
        <dbReference type="ChEBI" id="CHEBI:29950"/>
        <dbReference type="ChEBI" id="CHEBI:30616"/>
        <dbReference type="ChEBI" id="CHEBI:33019"/>
        <dbReference type="ChEBI" id="CHEBI:61963"/>
        <dbReference type="ChEBI" id="CHEBI:65315"/>
        <dbReference type="ChEBI" id="CHEBI:87170"/>
        <dbReference type="ChEBI" id="CHEBI:456215"/>
        <dbReference type="EC" id="2.8.1.13"/>
    </reaction>
</comment>
<comment type="subcellular location">
    <subcellularLocation>
        <location evidence="1">Cytoplasm</location>
    </subcellularLocation>
</comment>
<comment type="similarity">
    <text evidence="1">Belongs to the MnmA/TRMU family.</text>
</comment>
<comment type="sequence caution" evidence="2">
    <conflict type="erroneous initiation">
        <sequence resource="EMBL-CDS" id="ABI82120"/>
    </conflict>
</comment>
<accession>Q0BP64</accession>
<feature type="chain" id="PRO_0000349639" description="tRNA-specific 2-thiouridylase MnmA">
    <location>
        <begin position="1"/>
        <end position="359"/>
    </location>
</feature>
<feature type="region of interest" description="Interaction with target base in tRNA" evidence="1">
    <location>
        <begin position="95"/>
        <end position="97"/>
    </location>
</feature>
<feature type="region of interest" description="Interaction with tRNA" evidence="1">
    <location>
        <begin position="147"/>
        <end position="149"/>
    </location>
</feature>
<feature type="region of interest" description="Interaction with tRNA" evidence="1">
    <location>
        <begin position="309"/>
        <end position="310"/>
    </location>
</feature>
<feature type="active site" description="Nucleophile" evidence="1">
    <location>
        <position position="100"/>
    </location>
</feature>
<feature type="active site" description="Cysteine persulfide intermediate" evidence="1">
    <location>
        <position position="197"/>
    </location>
</feature>
<feature type="binding site" evidence="1">
    <location>
        <begin position="9"/>
        <end position="16"/>
    </location>
    <ligand>
        <name>ATP</name>
        <dbReference type="ChEBI" id="CHEBI:30616"/>
    </ligand>
</feature>
<feature type="binding site" evidence="1">
    <location>
        <position position="35"/>
    </location>
    <ligand>
        <name>ATP</name>
        <dbReference type="ChEBI" id="CHEBI:30616"/>
    </ligand>
</feature>
<feature type="binding site" evidence="1">
    <location>
        <position position="124"/>
    </location>
    <ligand>
        <name>ATP</name>
        <dbReference type="ChEBI" id="CHEBI:30616"/>
    </ligand>
</feature>
<feature type="site" description="Interaction with tRNA" evidence="1">
    <location>
        <position position="125"/>
    </location>
</feature>
<feature type="site" description="Interaction with tRNA" evidence="1">
    <location>
        <position position="342"/>
    </location>
</feature>
<feature type="disulfide bond" description="Alternate" evidence="1">
    <location>
        <begin position="100"/>
        <end position="197"/>
    </location>
</feature>
<reference key="1">
    <citation type="journal article" date="2006" name="J. Bacteriol.">
        <title>Chromosome rearrangement and diversification of Francisella tularensis revealed by the type B (OSU18) genome sequence.</title>
        <authorList>
            <person name="Petrosino J.F."/>
            <person name="Xiang Q."/>
            <person name="Karpathy S.E."/>
            <person name="Jiang H."/>
            <person name="Yerrapragada S."/>
            <person name="Liu Y."/>
            <person name="Gioia J."/>
            <person name="Hemphill L."/>
            <person name="Gonzalez A."/>
            <person name="Raghavan T.M."/>
            <person name="Uzman A."/>
            <person name="Fox G.E."/>
            <person name="Highlander S."/>
            <person name="Reichard M."/>
            <person name="Morton R.J."/>
            <person name="Clinkenbeard K.D."/>
            <person name="Weinstock G.M."/>
        </authorList>
    </citation>
    <scope>NUCLEOTIDE SEQUENCE [LARGE SCALE GENOMIC DNA]</scope>
    <source>
        <strain>OSU18</strain>
    </source>
</reference>
<evidence type="ECO:0000255" key="1">
    <source>
        <dbReference type="HAMAP-Rule" id="MF_00144"/>
    </source>
</evidence>
<evidence type="ECO:0000305" key="2"/>